<accession>Q8SQN7</accession>
<protein>
    <recommendedName>
        <fullName>Probable proteasome subunit beta type-2</fullName>
        <ecNumber>3.4.25.1</ecNumber>
    </recommendedName>
    <alternativeName>
        <fullName>26S proteasome beta-type subunit PUP1</fullName>
    </alternativeName>
    <alternativeName>
        <fullName>Multicatalytic endopeptidase complex subunit PUP1</fullName>
    </alternativeName>
</protein>
<organism>
    <name type="scientific">Encephalitozoon cuniculi (strain GB-M1)</name>
    <name type="common">Microsporidian parasite</name>
    <dbReference type="NCBI Taxonomy" id="284813"/>
    <lineage>
        <taxon>Eukaryota</taxon>
        <taxon>Fungi</taxon>
        <taxon>Fungi incertae sedis</taxon>
        <taxon>Microsporidia</taxon>
        <taxon>Unikaryonidae</taxon>
        <taxon>Encephalitozoon</taxon>
    </lineage>
</organism>
<name>PSB2_ENCCU</name>
<reference key="1">
    <citation type="journal article" date="2001" name="Nature">
        <title>Genome sequence and gene compaction of the eukaryote parasite Encephalitozoon cuniculi.</title>
        <authorList>
            <person name="Katinka M.D."/>
            <person name="Duprat S."/>
            <person name="Cornillot E."/>
            <person name="Metenier G."/>
            <person name="Thomarat F."/>
            <person name="Prensier G."/>
            <person name="Barbe V."/>
            <person name="Peyretaillade E."/>
            <person name="Brottier P."/>
            <person name="Wincker P."/>
            <person name="Delbac F."/>
            <person name="El Alaoui H."/>
            <person name="Peyret P."/>
            <person name="Saurin W."/>
            <person name="Gouy M."/>
            <person name="Weissenbach J."/>
            <person name="Vivares C.P."/>
        </authorList>
    </citation>
    <scope>NUCLEOTIDE SEQUENCE [LARGE SCALE GENOMIC DNA]</scope>
    <source>
        <strain>GB-M1</strain>
    </source>
</reference>
<reference key="2">
    <citation type="journal article" date="2006" name="Proteomics">
        <title>Proteomic analysis of the eukaryotic parasite Encephalitozoon cuniculi (microsporidia): a reference map for proteins expressed in late sporogonial stages.</title>
        <authorList>
            <person name="Brosson D."/>
            <person name="Kuhn L."/>
            <person name="Delbac F."/>
            <person name="Garin J."/>
            <person name="Vivares C.P."/>
            <person name="Texier C."/>
        </authorList>
    </citation>
    <scope>IDENTIFICATION BY MASS SPECTROMETRY [LARGE SCALE ANALYSIS]</scope>
    <scope>DEVELOPMENTAL STAGE</scope>
</reference>
<comment type="function">
    <text evidence="1">The proteasome degrades poly-ubiquitinated proteins in the cytoplasm and in the nucleus. It is essential for the regulated turnover of proteins and for the removal of misfolded proteins. The proteasome is a multicatalytic proteinase complex that is characterized by its ability to cleave peptides with Arg, Phe, Tyr, Leu, and Glu adjacent to the leaving group at neutral or slightly basic pH. It has an ATP-dependent proteolytic activity (By similarity).</text>
</comment>
<comment type="catalytic activity">
    <reaction>
        <text>Cleavage of peptide bonds with very broad specificity.</text>
        <dbReference type="EC" id="3.4.25.1"/>
    </reaction>
</comment>
<comment type="subunit">
    <text evidence="1">The 26S proteasome consists of a 20S proteasome core and two 19S regulatory subunits. The 20S proteasome core is composed of 28 subunits that are arranged in four stacked rings, resulting in a barrel-shaped structure. The two end rings are each formed by seven alpha subunits, and the two central rings are each formed by seven beta subunits. The catalytic chamber with the active sites is on the inside of the barrel (By similarity).</text>
</comment>
<comment type="subcellular location">
    <subcellularLocation>
        <location evidence="2">Cytoplasm</location>
    </subcellularLocation>
    <subcellularLocation>
        <location evidence="1">Nucleus</location>
    </subcellularLocation>
</comment>
<comment type="developmental stage">
    <text evidence="3">Expressed in late sporogonial stages.</text>
</comment>
<comment type="similarity">
    <text evidence="2">Belongs to the peptidase T1B family.</text>
</comment>
<sequence>MITKTGTTIVGMKYKTGVILAADTRSTQGPVVSDKNCVKIHQITDKIMCCGAGTAADASRVARMASRELRLFQNKYLRLPLVSHFRKVCTQHLHKYGGGIGAALIVGGIDSEGCHLYEIHPHGSENSALFVSLGSGSLGAIATLESRYRAMDKDEAIDLACDAVKAGILNDLYSGSNIDVCVIDYSGVEFLRNYRRIGVSENTDTLVYPLDSVRIKREEVFDIVEEY</sequence>
<feature type="propeptide" id="PRO_0000391409" description="Removed in mature form" evidence="1">
    <location>
        <begin position="1"/>
        <end position="6"/>
    </location>
</feature>
<feature type="chain" id="PRO_0000382761" description="Probable proteasome subunit beta type-2">
    <location>
        <begin position="7"/>
        <end position="227"/>
    </location>
</feature>
<feature type="active site" description="Nucleophile" evidence="1">
    <location>
        <position position="7"/>
    </location>
</feature>
<gene>
    <name type="primary">PUP1</name>
    <name type="ordered locus">ECU09_0720</name>
</gene>
<evidence type="ECO:0000250" key="1"/>
<evidence type="ECO:0000255" key="2">
    <source>
        <dbReference type="PROSITE-ProRule" id="PRU00809"/>
    </source>
</evidence>
<evidence type="ECO:0000269" key="3">
    <source>
    </source>
</evidence>
<dbReference type="EC" id="3.4.25.1"/>
<dbReference type="EMBL" id="AL590451">
    <property type="protein sequence ID" value="CAD27045.1"/>
    <property type="molecule type" value="Genomic_DNA"/>
</dbReference>
<dbReference type="RefSeq" id="XP_955626.1">
    <property type="nucleotide sequence ID" value="XM_950533.1"/>
</dbReference>
<dbReference type="SMR" id="Q8SQN7"/>
<dbReference type="FunCoup" id="Q8SQN7">
    <property type="interactions" value="180"/>
</dbReference>
<dbReference type="STRING" id="284813.Q8SQN7"/>
<dbReference type="MEROPS" id="T01.011"/>
<dbReference type="VEuPathDB" id="MicrosporidiaDB:ECU09_0720"/>
<dbReference type="HOGENOM" id="CLU_035750_3_0_1"/>
<dbReference type="InParanoid" id="Q8SQN7"/>
<dbReference type="OMA" id="GTQVDLC"/>
<dbReference type="OrthoDB" id="429533at2759"/>
<dbReference type="Proteomes" id="UP000000819">
    <property type="component" value="Chromosome IX"/>
</dbReference>
<dbReference type="GO" id="GO:0005737">
    <property type="term" value="C:cytoplasm"/>
    <property type="evidence" value="ECO:0007669"/>
    <property type="project" value="UniProtKB-SubCell"/>
</dbReference>
<dbReference type="GO" id="GO:0005634">
    <property type="term" value="C:nucleus"/>
    <property type="evidence" value="ECO:0007669"/>
    <property type="project" value="UniProtKB-SubCell"/>
</dbReference>
<dbReference type="GO" id="GO:0019774">
    <property type="term" value="C:proteasome core complex, beta-subunit complex"/>
    <property type="evidence" value="ECO:0000250"/>
    <property type="project" value="UniProtKB"/>
</dbReference>
<dbReference type="GO" id="GO:0004298">
    <property type="term" value="F:threonine-type endopeptidase activity"/>
    <property type="evidence" value="ECO:0007669"/>
    <property type="project" value="UniProtKB-KW"/>
</dbReference>
<dbReference type="GO" id="GO:0051603">
    <property type="term" value="P:proteolysis involved in protein catabolic process"/>
    <property type="evidence" value="ECO:0007669"/>
    <property type="project" value="InterPro"/>
</dbReference>
<dbReference type="CDD" id="cd03763">
    <property type="entry name" value="proteasome_beta_type_7"/>
    <property type="match status" value="1"/>
</dbReference>
<dbReference type="Gene3D" id="3.60.20.10">
    <property type="entry name" value="Glutamine Phosphoribosylpyrophosphate, subunit 1, domain 1"/>
    <property type="match status" value="1"/>
</dbReference>
<dbReference type="InterPro" id="IPR029055">
    <property type="entry name" value="Ntn_hydrolases_N"/>
</dbReference>
<dbReference type="InterPro" id="IPR016050">
    <property type="entry name" value="Proteasome_bsu_CS"/>
</dbReference>
<dbReference type="InterPro" id="IPR001353">
    <property type="entry name" value="Proteasome_sua/b"/>
</dbReference>
<dbReference type="InterPro" id="IPR023333">
    <property type="entry name" value="Proteasome_suB-type"/>
</dbReference>
<dbReference type="PANTHER" id="PTHR32194">
    <property type="entry name" value="METALLOPROTEASE TLDD"/>
    <property type="match status" value="1"/>
</dbReference>
<dbReference type="PANTHER" id="PTHR32194:SF4">
    <property type="entry name" value="PROTEASOME SUBUNIT BETA TYPE-7"/>
    <property type="match status" value="1"/>
</dbReference>
<dbReference type="Pfam" id="PF00227">
    <property type="entry name" value="Proteasome"/>
    <property type="match status" value="1"/>
</dbReference>
<dbReference type="SUPFAM" id="SSF56235">
    <property type="entry name" value="N-terminal nucleophile aminohydrolases (Ntn hydrolases)"/>
    <property type="match status" value="1"/>
</dbReference>
<dbReference type="PROSITE" id="PS00854">
    <property type="entry name" value="PROTEASOME_BETA_1"/>
    <property type="match status" value="1"/>
</dbReference>
<dbReference type="PROSITE" id="PS51476">
    <property type="entry name" value="PROTEASOME_BETA_2"/>
    <property type="match status" value="1"/>
</dbReference>
<proteinExistence type="evidence at protein level"/>
<keyword id="KW-0963">Cytoplasm</keyword>
<keyword id="KW-0378">Hydrolase</keyword>
<keyword id="KW-0539">Nucleus</keyword>
<keyword id="KW-0645">Protease</keyword>
<keyword id="KW-0647">Proteasome</keyword>
<keyword id="KW-1185">Reference proteome</keyword>
<keyword id="KW-0888">Threonine protease</keyword>